<feature type="chain" id="PRO_1000124722" description="ATP-dependent Clp protease proteolytic subunit">
    <location>
        <begin position="1"/>
        <end position="207"/>
    </location>
</feature>
<feature type="active site" description="Nucleophile" evidence="1">
    <location>
        <position position="111"/>
    </location>
</feature>
<feature type="active site" evidence="1">
    <location>
        <position position="136"/>
    </location>
</feature>
<sequence length="207" mass="22875">MSYQENNAMPSIMDALVPMVVEQTSRGERSYDIYSRLLKERVIFLTGQVEDHMANLVVAQLLFLESENPDKDIFLYINSPGGSVTAGMSIYDTMQFIKPNVSTVCMGQACSMGAFLLAGGAPGKRYVLPNSRVMIHQPLGGFQGQASDIQIHAQEILTIKKKLNTLLAEHTGQPLEVIEQDTDRDNFMSADDAVKYGLVDAVLNKRD</sequence>
<accession>B5FBZ8</accession>
<organism>
    <name type="scientific">Aliivibrio fischeri (strain MJ11)</name>
    <name type="common">Vibrio fischeri</name>
    <dbReference type="NCBI Taxonomy" id="388396"/>
    <lineage>
        <taxon>Bacteria</taxon>
        <taxon>Pseudomonadati</taxon>
        <taxon>Pseudomonadota</taxon>
        <taxon>Gammaproteobacteria</taxon>
        <taxon>Vibrionales</taxon>
        <taxon>Vibrionaceae</taxon>
        <taxon>Aliivibrio</taxon>
    </lineage>
</organism>
<comment type="function">
    <text evidence="1">Cleaves peptides in various proteins in a process that requires ATP hydrolysis. Has a chymotrypsin-like activity. Plays a major role in the degradation of misfolded proteins.</text>
</comment>
<comment type="catalytic activity">
    <reaction evidence="1">
        <text>Hydrolysis of proteins to small peptides in the presence of ATP and magnesium. alpha-casein is the usual test substrate. In the absence of ATP, only oligopeptides shorter than five residues are hydrolyzed (such as succinyl-Leu-Tyr-|-NHMec, and Leu-Tyr-Leu-|-Tyr-Trp, in which cleavage of the -Tyr-|-Leu- and -Tyr-|-Trp bonds also occurs).</text>
        <dbReference type="EC" id="3.4.21.92"/>
    </reaction>
</comment>
<comment type="subunit">
    <text evidence="1">Fourteen ClpP subunits assemble into 2 heptameric rings which stack back to back to give a disk-like structure with a central cavity, resembling the structure of eukaryotic proteasomes.</text>
</comment>
<comment type="subcellular location">
    <subcellularLocation>
        <location evidence="1">Cytoplasm</location>
    </subcellularLocation>
</comment>
<comment type="similarity">
    <text evidence="1">Belongs to the peptidase S14 family.</text>
</comment>
<evidence type="ECO:0000255" key="1">
    <source>
        <dbReference type="HAMAP-Rule" id="MF_00444"/>
    </source>
</evidence>
<proteinExistence type="inferred from homology"/>
<name>CLPP_ALIFM</name>
<reference key="1">
    <citation type="submission" date="2008-08" db="EMBL/GenBank/DDBJ databases">
        <title>Complete sequence of Vibrio fischeri strain MJ11.</title>
        <authorList>
            <person name="Mandel M.J."/>
            <person name="Stabb E.V."/>
            <person name="Ruby E.G."/>
            <person name="Ferriera S."/>
            <person name="Johnson J."/>
            <person name="Kravitz S."/>
            <person name="Beeson K."/>
            <person name="Sutton G."/>
            <person name="Rogers Y.-H."/>
            <person name="Friedman R."/>
            <person name="Frazier M."/>
            <person name="Venter J.C."/>
        </authorList>
    </citation>
    <scope>NUCLEOTIDE SEQUENCE [LARGE SCALE GENOMIC DNA]</scope>
    <source>
        <strain>MJ11</strain>
    </source>
</reference>
<keyword id="KW-0963">Cytoplasm</keyword>
<keyword id="KW-0378">Hydrolase</keyword>
<keyword id="KW-0645">Protease</keyword>
<keyword id="KW-0720">Serine protease</keyword>
<protein>
    <recommendedName>
        <fullName evidence="1">ATP-dependent Clp protease proteolytic subunit</fullName>
        <ecNumber evidence="1">3.4.21.92</ecNumber>
    </recommendedName>
    <alternativeName>
        <fullName evidence="1">Endopeptidase Clp</fullName>
    </alternativeName>
</protein>
<dbReference type="EC" id="3.4.21.92" evidence="1"/>
<dbReference type="EMBL" id="CP001139">
    <property type="protein sequence ID" value="ACH66241.1"/>
    <property type="molecule type" value="Genomic_DNA"/>
</dbReference>
<dbReference type="RefSeq" id="WP_005418252.1">
    <property type="nucleotide sequence ID" value="NC_011184.1"/>
</dbReference>
<dbReference type="SMR" id="B5FBZ8"/>
<dbReference type="MEROPS" id="S14.001"/>
<dbReference type="GeneID" id="54163464"/>
<dbReference type="KEGG" id="vfm:VFMJ11_0833"/>
<dbReference type="HOGENOM" id="CLU_058707_3_2_6"/>
<dbReference type="Proteomes" id="UP000001857">
    <property type="component" value="Chromosome I"/>
</dbReference>
<dbReference type="GO" id="GO:0005737">
    <property type="term" value="C:cytoplasm"/>
    <property type="evidence" value="ECO:0007669"/>
    <property type="project" value="UniProtKB-SubCell"/>
</dbReference>
<dbReference type="GO" id="GO:0009368">
    <property type="term" value="C:endopeptidase Clp complex"/>
    <property type="evidence" value="ECO:0007669"/>
    <property type="project" value="TreeGrafter"/>
</dbReference>
<dbReference type="GO" id="GO:0004176">
    <property type="term" value="F:ATP-dependent peptidase activity"/>
    <property type="evidence" value="ECO:0007669"/>
    <property type="project" value="InterPro"/>
</dbReference>
<dbReference type="GO" id="GO:0051117">
    <property type="term" value="F:ATPase binding"/>
    <property type="evidence" value="ECO:0007669"/>
    <property type="project" value="TreeGrafter"/>
</dbReference>
<dbReference type="GO" id="GO:0004252">
    <property type="term" value="F:serine-type endopeptidase activity"/>
    <property type="evidence" value="ECO:0007669"/>
    <property type="project" value="UniProtKB-UniRule"/>
</dbReference>
<dbReference type="GO" id="GO:0006515">
    <property type="term" value="P:protein quality control for misfolded or incompletely synthesized proteins"/>
    <property type="evidence" value="ECO:0007669"/>
    <property type="project" value="TreeGrafter"/>
</dbReference>
<dbReference type="CDD" id="cd07017">
    <property type="entry name" value="S14_ClpP_2"/>
    <property type="match status" value="1"/>
</dbReference>
<dbReference type="FunFam" id="3.90.226.10:FF:000001">
    <property type="entry name" value="ATP-dependent Clp protease proteolytic subunit"/>
    <property type="match status" value="1"/>
</dbReference>
<dbReference type="Gene3D" id="3.90.226.10">
    <property type="entry name" value="2-enoyl-CoA Hydratase, Chain A, domain 1"/>
    <property type="match status" value="1"/>
</dbReference>
<dbReference type="HAMAP" id="MF_00444">
    <property type="entry name" value="ClpP"/>
    <property type="match status" value="1"/>
</dbReference>
<dbReference type="InterPro" id="IPR001907">
    <property type="entry name" value="ClpP"/>
</dbReference>
<dbReference type="InterPro" id="IPR029045">
    <property type="entry name" value="ClpP/crotonase-like_dom_sf"/>
</dbReference>
<dbReference type="InterPro" id="IPR023562">
    <property type="entry name" value="ClpP/TepA"/>
</dbReference>
<dbReference type="InterPro" id="IPR033135">
    <property type="entry name" value="ClpP_His_AS"/>
</dbReference>
<dbReference type="InterPro" id="IPR018215">
    <property type="entry name" value="ClpP_Ser_AS"/>
</dbReference>
<dbReference type="NCBIfam" id="TIGR00493">
    <property type="entry name" value="clpP"/>
    <property type="match status" value="1"/>
</dbReference>
<dbReference type="NCBIfam" id="NF001368">
    <property type="entry name" value="PRK00277.1"/>
    <property type="match status" value="1"/>
</dbReference>
<dbReference type="NCBIfam" id="NF009205">
    <property type="entry name" value="PRK12553.1"/>
    <property type="match status" value="1"/>
</dbReference>
<dbReference type="PANTHER" id="PTHR10381">
    <property type="entry name" value="ATP-DEPENDENT CLP PROTEASE PROTEOLYTIC SUBUNIT"/>
    <property type="match status" value="1"/>
</dbReference>
<dbReference type="PANTHER" id="PTHR10381:SF70">
    <property type="entry name" value="ATP-DEPENDENT CLP PROTEASE PROTEOLYTIC SUBUNIT"/>
    <property type="match status" value="1"/>
</dbReference>
<dbReference type="Pfam" id="PF00574">
    <property type="entry name" value="CLP_protease"/>
    <property type="match status" value="1"/>
</dbReference>
<dbReference type="PRINTS" id="PR00127">
    <property type="entry name" value="CLPPROTEASEP"/>
</dbReference>
<dbReference type="SUPFAM" id="SSF52096">
    <property type="entry name" value="ClpP/crotonase"/>
    <property type="match status" value="1"/>
</dbReference>
<dbReference type="PROSITE" id="PS00382">
    <property type="entry name" value="CLP_PROTEASE_HIS"/>
    <property type="match status" value="1"/>
</dbReference>
<dbReference type="PROSITE" id="PS00381">
    <property type="entry name" value="CLP_PROTEASE_SER"/>
    <property type="match status" value="1"/>
</dbReference>
<gene>
    <name evidence="1" type="primary">clpP</name>
    <name type="ordered locus">VFMJ11_0833</name>
</gene>